<proteinExistence type="inferred from homology"/>
<protein>
    <recommendedName>
        <fullName evidence="1">4-hydroxy-tetrahydrodipicolinate reductase</fullName>
        <shortName evidence="1">HTPA reductase</shortName>
        <ecNumber evidence="1">1.17.1.8</ecNumber>
    </recommendedName>
</protein>
<gene>
    <name evidence="1" type="primary">dapB</name>
    <name type="ordered locus">PputGB1_4726</name>
</gene>
<organism>
    <name type="scientific">Pseudomonas putida (strain GB-1)</name>
    <dbReference type="NCBI Taxonomy" id="76869"/>
    <lineage>
        <taxon>Bacteria</taxon>
        <taxon>Pseudomonadati</taxon>
        <taxon>Pseudomonadota</taxon>
        <taxon>Gammaproteobacteria</taxon>
        <taxon>Pseudomonadales</taxon>
        <taxon>Pseudomonadaceae</taxon>
        <taxon>Pseudomonas</taxon>
    </lineage>
</organism>
<accession>B0KIS3</accession>
<comment type="function">
    <text evidence="1">Catalyzes the conversion of 4-hydroxy-tetrahydrodipicolinate (HTPA) to tetrahydrodipicolinate.</text>
</comment>
<comment type="catalytic activity">
    <reaction evidence="1">
        <text>(S)-2,3,4,5-tetrahydrodipicolinate + NAD(+) + H2O = (2S,4S)-4-hydroxy-2,3,4,5-tetrahydrodipicolinate + NADH + H(+)</text>
        <dbReference type="Rhea" id="RHEA:35323"/>
        <dbReference type="ChEBI" id="CHEBI:15377"/>
        <dbReference type="ChEBI" id="CHEBI:15378"/>
        <dbReference type="ChEBI" id="CHEBI:16845"/>
        <dbReference type="ChEBI" id="CHEBI:57540"/>
        <dbReference type="ChEBI" id="CHEBI:57945"/>
        <dbReference type="ChEBI" id="CHEBI:67139"/>
        <dbReference type="EC" id="1.17.1.8"/>
    </reaction>
</comment>
<comment type="catalytic activity">
    <reaction evidence="1">
        <text>(S)-2,3,4,5-tetrahydrodipicolinate + NADP(+) + H2O = (2S,4S)-4-hydroxy-2,3,4,5-tetrahydrodipicolinate + NADPH + H(+)</text>
        <dbReference type="Rhea" id="RHEA:35331"/>
        <dbReference type="ChEBI" id="CHEBI:15377"/>
        <dbReference type="ChEBI" id="CHEBI:15378"/>
        <dbReference type="ChEBI" id="CHEBI:16845"/>
        <dbReference type="ChEBI" id="CHEBI:57783"/>
        <dbReference type="ChEBI" id="CHEBI:58349"/>
        <dbReference type="ChEBI" id="CHEBI:67139"/>
        <dbReference type="EC" id="1.17.1.8"/>
    </reaction>
</comment>
<comment type="pathway">
    <text evidence="1">Amino-acid biosynthesis; L-lysine biosynthesis via DAP pathway; (S)-tetrahydrodipicolinate from L-aspartate: step 4/4.</text>
</comment>
<comment type="subcellular location">
    <subcellularLocation>
        <location evidence="1">Cytoplasm</location>
    </subcellularLocation>
</comment>
<comment type="similarity">
    <text evidence="1">Belongs to the DapB family.</text>
</comment>
<comment type="caution">
    <text evidence="2">Was originally thought to be a dihydrodipicolinate reductase (DHDPR), catalyzing the conversion of dihydrodipicolinate to tetrahydrodipicolinate. However, it was shown in E.coli that the substrate of the enzymatic reaction is not dihydrodipicolinate (DHDP) but in fact (2S,4S)-4-hydroxy-2,3,4,5-tetrahydrodipicolinic acid (HTPA), the product released by the DapA-catalyzed reaction.</text>
</comment>
<sequence length="267" mass="28423">MRRIAVMGAAGRMGKTLIEAVQQTPGAGLTAAIDRPDSSLVGADAGELAALGRIGVLLSDDLAKVADEFDVLIDFTHPSVTLKNLAFCRKHGKAMIIGTTGFSVEEKQLLAEAGKDIPIVFAANFSVGVNLSLKLLDMAARVLGDDVDIEIIEAHHRHKVDAPSGTALRMGEVVANALGRNLQEVAVYGREGQTGARDRKTIGFATVRAGDVVGDHTVLFAAEGERLEITHKASSRMTFAKGAVRAALWLDGREPALYDMQDVLELR</sequence>
<dbReference type="EC" id="1.17.1.8" evidence="1"/>
<dbReference type="EMBL" id="CP000926">
    <property type="protein sequence ID" value="ABZ00613.1"/>
    <property type="molecule type" value="Genomic_DNA"/>
</dbReference>
<dbReference type="RefSeq" id="WP_012274253.1">
    <property type="nucleotide sequence ID" value="NC_010322.1"/>
</dbReference>
<dbReference type="SMR" id="B0KIS3"/>
<dbReference type="KEGG" id="ppg:PputGB1_4726"/>
<dbReference type="eggNOG" id="COG0289">
    <property type="taxonomic scope" value="Bacteria"/>
</dbReference>
<dbReference type="HOGENOM" id="CLU_047479_2_1_6"/>
<dbReference type="UniPathway" id="UPA00034">
    <property type="reaction ID" value="UER00018"/>
</dbReference>
<dbReference type="Proteomes" id="UP000002157">
    <property type="component" value="Chromosome"/>
</dbReference>
<dbReference type="GO" id="GO:0005829">
    <property type="term" value="C:cytosol"/>
    <property type="evidence" value="ECO:0007669"/>
    <property type="project" value="TreeGrafter"/>
</dbReference>
<dbReference type="GO" id="GO:0008839">
    <property type="term" value="F:4-hydroxy-tetrahydrodipicolinate reductase"/>
    <property type="evidence" value="ECO:0007669"/>
    <property type="project" value="UniProtKB-EC"/>
</dbReference>
<dbReference type="GO" id="GO:0051287">
    <property type="term" value="F:NAD binding"/>
    <property type="evidence" value="ECO:0007669"/>
    <property type="project" value="UniProtKB-UniRule"/>
</dbReference>
<dbReference type="GO" id="GO:0050661">
    <property type="term" value="F:NADP binding"/>
    <property type="evidence" value="ECO:0007669"/>
    <property type="project" value="UniProtKB-UniRule"/>
</dbReference>
<dbReference type="GO" id="GO:0016726">
    <property type="term" value="F:oxidoreductase activity, acting on CH or CH2 groups, NAD or NADP as acceptor"/>
    <property type="evidence" value="ECO:0007669"/>
    <property type="project" value="UniProtKB-UniRule"/>
</dbReference>
<dbReference type="GO" id="GO:0019877">
    <property type="term" value="P:diaminopimelate biosynthetic process"/>
    <property type="evidence" value="ECO:0007669"/>
    <property type="project" value="UniProtKB-UniRule"/>
</dbReference>
<dbReference type="GO" id="GO:0009089">
    <property type="term" value="P:lysine biosynthetic process via diaminopimelate"/>
    <property type="evidence" value="ECO:0007669"/>
    <property type="project" value="UniProtKB-UniRule"/>
</dbReference>
<dbReference type="CDD" id="cd02274">
    <property type="entry name" value="DHDPR_N"/>
    <property type="match status" value="1"/>
</dbReference>
<dbReference type="FunFam" id="3.30.360.10:FF:000004">
    <property type="entry name" value="4-hydroxy-tetrahydrodipicolinate reductase"/>
    <property type="match status" value="1"/>
</dbReference>
<dbReference type="FunFam" id="3.40.50.720:FF:000048">
    <property type="entry name" value="4-hydroxy-tetrahydrodipicolinate reductase"/>
    <property type="match status" value="1"/>
</dbReference>
<dbReference type="Gene3D" id="3.30.360.10">
    <property type="entry name" value="Dihydrodipicolinate Reductase, domain 2"/>
    <property type="match status" value="1"/>
</dbReference>
<dbReference type="Gene3D" id="3.40.50.720">
    <property type="entry name" value="NAD(P)-binding Rossmann-like Domain"/>
    <property type="match status" value="1"/>
</dbReference>
<dbReference type="HAMAP" id="MF_00102">
    <property type="entry name" value="DapB"/>
    <property type="match status" value="1"/>
</dbReference>
<dbReference type="InterPro" id="IPR022663">
    <property type="entry name" value="DapB_C"/>
</dbReference>
<dbReference type="InterPro" id="IPR000846">
    <property type="entry name" value="DapB_N"/>
</dbReference>
<dbReference type="InterPro" id="IPR022664">
    <property type="entry name" value="DapB_N_CS"/>
</dbReference>
<dbReference type="InterPro" id="IPR023940">
    <property type="entry name" value="DHDPR_bac"/>
</dbReference>
<dbReference type="InterPro" id="IPR036291">
    <property type="entry name" value="NAD(P)-bd_dom_sf"/>
</dbReference>
<dbReference type="NCBIfam" id="TIGR00036">
    <property type="entry name" value="dapB"/>
    <property type="match status" value="1"/>
</dbReference>
<dbReference type="PANTHER" id="PTHR20836:SF0">
    <property type="entry name" value="4-HYDROXY-TETRAHYDRODIPICOLINATE REDUCTASE 1, CHLOROPLASTIC-RELATED"/>
    <property type="match status" value="1"/>
</dbReference>
<dbReference type="PANTHER" id="PTHR20836">
    <property type="entry name" value="DIHYDRODIPICOLINATE REDUCTASE"/>
    <property type="match status" value="1"/>
</dbReference>
<dbReference type="Pfam" id="PF05173">
    <property type="entry name" value="DapB_C"/>
    <property type="match status" value="1"/>
</dbReference>
<dbReference type="Pfam" id="PF01113">
    <property type="entry name" value="DapB_N"/>
    <property type="match status" value="1"/>
</dbReference>
<dbReference type="PIRSF" id="PIRSF000161">
    <property type="entry name" value="DHPR"/>
    <property type="match status" value="1"/>
</dbReference>
<dbReference type="SUPFAM" id="SSF55347">
    <property type="entry name" value="Glyceraldehyde-3-phosphate dehydrogenase-like, C-terminal domain"/>
    <property type="match status" value="1"/>
</dbReference>
<dbReference type="SUPFAM" id="SSF51735">
    <property type="entry name" value="NAD(P)-binding Rossmann-fold domains"/>
    <property type="match status" value="1"/>
</dbReference>
<dbReference type="PROSITE" id="PS01298">
    <property type="entry name" value="DAPB"/>
    <property type="match status" value="1"/>
</dbReference>
<reference key="1">
    <citation type="submission" date="2008-01" db="EMBL/GenBank/DDBJ databases">
        <title>Complete sequence of Pseudomonas putida GB-1.</title>
        <authorList>
            <consortium name="US DOE Joint Genome Institute"/>
            <person name="Copeland A."/>
            <person name="Lucas S."/>
            <person name="Lapidus A."/>
            <person name="Barry K."/>
            <person name="Glavina del Rio T."/>
            <person name="Dalin E."/>
            <person name="Tice H."/>
            <person name="Pitluck S."/>
            <person name="Bruce D."/>
            <person name="Goodwin L."/>
            <person name="Chertkov O."/>
            <person name="Brettin T."/>
            <person name="Detter J.C."/>
            <person name="Han C."/>
            <person name="Kuske C.R."/>
            <person name="Schmutz J."/>
            <person name="Larimer F."/>
            <person name="Land M."/>
            <person name="Hauser L."/>
            <person name="Kyrpides N."/>
            <person name="Kim E."/>
            <person name="McCarthy J.K."/>
            <person name="Richardson P."/>
        </authorList>
    </citation>
    <scope>NUCLEOTIDE SEQUENCE [LARGE SCALE GENOMIC DNA]</scope>
    <source>
        <strain>GB-1</strain>
    </source>
</reference>
<name>DAPB_PSEPG</name>
<keyword id="KW-0028">Amino-acid biosynthesis</keyword>
<keyword id="KW-0963">Cytoplasm</keyword>
<keyword id="KW-0220">Diaminopimelate biosynthesis</keyword>
<keyword id="KW-0457">Lysine biosynthesis</keyword>
<keyword id="KW-0520">NAD</keyword>
<keyword id="KW-0521">NADP</keyword>
<keyword id="KW-0560">Oxidoreductase</keyword>
<feature type="chain" id="PRO_1000075684" description="4-hydroxy-tetrahydrodipicolinate reductase">
    <location>
        <begin position="1"/>
        <end position="267"/>
    </location>
</feature>
<feature type="active site" description="Proton donor/acceptor" evidence="1">
    <location>
        <position position="155"/>
    </location>
</feature>
<feature type="active site" description="Proton donor" evidence="1">
    <location>
        <position position="159"/>
    </location>
</feature>
<feature type="binding site" evidence="1">
    <location>
        <begin position="8"/>
        <end position="13"/>
    </location>
    <ligand>
        <name>NAD(+)</name>
        <dbReference type="ChEBI" id="CHEBI:57540"/>
    </ligand>
</feature>
<feature type="binding site" evidence="1">
    <location>
        <position position="34"/>
    </location>
    <ligand>
        <name>NAD(+)</name>
        <dbReference type="ChEBI" id="CHEBI:57540"/>
    </ligand>
</feature>
<feature type="binding site" evidence="1">
    <location>
        <position position="35"/>
    </location>
    <ligand>
        <name>NADP(+)</name>
        <dbReference type="ChEBI" id="CHEBI:58349"/>
    </ligand>
</feature>
<feature type="binding site" evidence="1">
    <location>
        <begin position="98"/>
        <end position="100"/>
    </location>
    <ligand>
        <name>NAD(+)</name>
        <dbReference type="ChEBI" id="CHEBI:57540"/>
    </ligand>
</feature>
<feature type="binding site" evidence="1">
    <location>
        <begin position="122"/>
        <end position="125"/>
    </location>
    <ligand>
        <name>NAD(+)</name>
        <dbReference type="ChEBI" id="CHEBI:57540"/>
    </ligand>
</feature>
<feature type="binding site" evidence="1">
    <location>
        <position position="156"/>
    </location>
    <ligand>
        <name>(S)-2,3,4,5-tetrahydrodipicolinate</name>
        <dbReference type="ChEBI" id="CHEBI:16845"/>
    </ligand>
</feature>
<feature type="binding site" evidence="1">
    <location>
        <begin position="165"/>
        <end position="166"/>
    </location>
    <ligand>
        <name>(S)-2,3,4,5-tetrahydrodipicolinate</name>
        <dbReference type="ChEBI" id="CHEBI:16845"/>
    </ligand>
</feature>
<evidence type="ECO:0000255" key="1">
    <source>
        <dbReference type="HAMAP-Rule" id="MF_00102"/>
    </source>
</evidence>
<evidence type="ECO:0000305" key="2"/>